<accession>P0C953</accession>
<accession>A2QY48</accession>
<accession>O13413</accession>
<keyword id="KW-0007">Acetylation</keyword>
<keyword id="KW-0158">Chromosome</keyword>
<keyword id="KW-0227">DNA damage</keyword>
<keyword id="KW-0234">DNA repair</keyword>
<keyword id="KW-0238">DNA-binding</keyword>
<keyword id="KW-0488">Methylation</keyword>
<keyword id="KW-0544">Nucleosome core</keyword>
<keyword id="KW-0539">Nucleus</keyword>
<keyword id="KW-0597">Phosphoprotein</keyword>
<keyword id="KW-1185">Reference proteome</keyword>
<feature type="initiator methionine" description="Removed" evidence="1">
    <location>
        <position position="1"/>
    </location>
</feature>
<feature type="chain" id="PRO_0000372304" description="Histone H2A">
    <location>
        <begin position="2"/>
        <end position="134"/>
    </location>
</feature>
<feature type="region of interest" description="Disordered" evidence="2">
    <location>
        <begin position="1"/>
        <end position="24"/>
    </location>
</feature>
<feature type="region of interest" description="Disordered" evidence="2">
    <location>
        <begin position="115"/>
        <end position="134"/>
    </location>
</feature>
<feature type="short sequence motif" description="[ST]-Q motif">
    <location>
        <begin position="131"/>
        <end position="132"/>
    </location>
</feature>
<feature type="compositionally biased region" description="Gly residues" evidence="2">
    <location>
        <begin position="1"/>
        <end position="10"/>
    </location>
</feature>
<feature type="site" description="Not ubiquitinated" evidence="3">
    <location>
        <position position="120"/>
    </location>
</feature>
<feature type="modified residue" description="N6-acetyllysine" evidence="1">
    <location>
        <position position="5"/>
    </location>
</feature>
<feature type="modified residue" description="N6-acetyllysine" evidence="1">
    <location>
        <position position="9"/>
    </location>
</feature>
<feature type="modified residue" description="N5-methylglutamine" evidence="1">
    <location>
        <position position="106"/>
    </location>
</feature>
<feature type="modified residue" description="Phosphoserine" evidence="1">
    <location>
        <position position="131"/>
    </location>
</feature>
<protein>
    <recommendedName>
        <fullName>Histone H2A</fullName>
    </recommendedName>
</protein>
<evidence type="ECO:0000250" key="1"/>
<evidence type="ECO:0000256" key="2">
    <source>
        <dbReference type="SAM" id="MobiDB-lite"/>
    </source>
</evidence>
<evidence type="ECO:0000305" key="3"/>
<gene>
    <name type="primary">httA</name>
    <name type="synonym">hta1</name>
    <name type="ORF">An11g11300</name>
</gene>
<proteinExistence type="inferred from homology"/>
<sequence length="134" mass="14149">MTGGKSGGKASGSKNAQSRSSKAGLAFPVGRVHRLLRKGNYAQRVGAGAPVYLAAVLEYLAAEILELAGNAARDNKKTRIIPRHLQLAIRNDEELNKLLGHVTIAQGGVLPNIHQNLLPKKTPKSGKGPGSQEL</sequence>
<dbReference type="EMBL" id="AM270257">
    <property type="protein sequence ID" value="CAK40928.1"/>
    <property type="molecule type" value="Genomic_DNA"/>
</dbReference>
<dbReference type="RefSeq" id="XP_001395087.1">
    <property type="nucleotide sequence ID" value="XM_001395050.2"/>
</dbReference>
<dbReference type="SMR" id="P0C953"/>
<dbReference type="EnsemblFungi" id="CAK40928">
    <property type="protein sequence ID" value="CAK40928"/>
    <property type="gene ID" value="An11g11300"/>
</dbReference>
<dbReference type="GeneID" id="4985347"/>
<dbReference type="KEGG" id="ang:An11g11300"/>
<dbReference type="VEuPathDB" id="FungiDB:An11g11300"/>
<dbReference type="HOGENOM" id="CLU_062828_3_0_1"/>
<dbReference type="Proteomes" id="UP000006706">
    <property type="component" value="Chromosome 7R"/>
</dbReference>
<dbReference type="GO" id="GO:0000786">
    <property type="term" value="C:nucleosome"/>
    <property type="evidence" value="ECO:0007669"/>
    <property type="project" value="UniProtKB-KW"/>
</dbReference>
<dbReference type="GO" id="GO:0005634">
    <property type="term" value="C:nucleus"/>
    <property type="evidence" value="ECO:0007669"/>
    <property type="project" value="UniProtKB-SubCell"/>
</dbReference>
<dbReference type="GO" id="GO:0003677">
    <property type="term" value="F:DNA binding"/>
    <property type="evidence" value="ECO:0007669"/>
    <property type="project" value="UniProtKB-KW"/>
</dbReference>
<dbReference type="GO" id="GO:0046982">
    <property type="term" value="F:protein heterodimerization activity"/>
    <property type="evidence" value="ECO:0007669"/>
    <property type="project" value="InterPro"/>
</dbReference>
<dbReference type="GO" id="GO:0030527">
    <property type="term" value="F:structural constituent of chromatin"/>
    <property type="evidence" value="ECO:0007669"/>
    <property type="project" value="InterPro"/>
</dbReference>
<dbReference type="GO" id="GO:0006281">
    <property type="term" value="P:DNA repair"/>
    <property type="evidence" value="ECO:0007669"/>
    <property type="project" value="UniProtKB-KW"/>
</dbReference>
<dbReference type="CDD" id="cd00074">
    <property type="entry name" value="HFD_H2A"/>
    <property type="match status" value="1"/>
</dbReference>
<dbReference type="FunFam" id="1.10.20.10:FF:000008">
    <property type="entry name" value="Histone H2A"/>
    <property type="match status" value="1"/>
</dbReference>
<dbReference type="Gene3D" id="1.10.20.10">
    <property type="entry name" value="Histone, subunit A"/>
    <property type="match status" value="1"/>
</dbReference>
<dbReference type="InterPro" id="IPR009072">
    <property type="entry name" value="Histone-fold"/>
</dbReference>
<dbReference type="InterPro" id="IPR002119">
    <property type="entry name" value="Histone_H2A"/>
</dbReference>
<dbReference type="InterPro" id="IPR007125">
    <property type="entry name" value="Histone_H2A/H2B/H3"/>
</dbReference>
<dbReference type="InterPro" id="IPR032454">
    <property type="entry name" value="Histone_H2A_C"/>
</dbReference>
<dbReference type="InterPro" id="IPR032458">
    <property type="entry name" value="Histone_H2A_CS"/>
</dbReference>
<dbReference type="PANTHER" id="PTHR23430">
    <property type="entry name" value="HISTONE H2A"/>
    <property type="match status" value="1"/>
</dbReference>
<dbReference type="Pfam" id="PF00125">
    <property type="entry name" value="Histone"/>
    <property type="match status" value="1"/>
</dbReference>
<dbReference type="Pfam" id="PF16211">
    <property type="entry name" value="Histone_H2A_C"/>
    <property type="match status" value="1"/>
</dbReference>
<dbReference type="PRINTS" id="PR00620">
    <property type="entry name" value="HISTONEH2A"/>
</dbReference>
<dbReference type="SMART" id="SM00414">
    <property type="entry name" value="H2A"/>
    <property type="match status" value="1"/>
</dbReference>
<dbReference type="SUPFAM" id="SSF47113">
    <property type="entry name" value="Histone-fold"/>
    <property type="match status" value="1"/>
</dbReference>
<dbReference type="PROSITE" id="PS00046">
    <property type="entry name" value="HISTONE_H2A"/>
    <property type="match status" value="1"/>
</dbReference>
<comment type="function">
    <text>Core component of nucleosome which plays a central role in DNA double strand break (DSB) repair. Nucleosomes wrap and compact DNA into chromatin, limiting DNA accessibility to the cellular machineries which require DNA as a template. Histones thereby play a central role in transcription regulation, DNA repair, DNA replication and chromosomal stability. DNA accessibility is regulated via a complex set of post-translational modifications of histones, also called histone code, and nucleosome remodeling.</text>
</comment>
<comment type="subunit">
    <text>The nucleosome is a histone octamer containing two molecules each of H2A, H2B, H3 and H4 assembled in one H3-H4 heterotetramer and two H2A-H2B heterodimers. The octamer wraps approximately 147 bp of DNA.</text>
</comment>
<comment type="subcellular location">
    <subcellularLocation>
        <location>Nucleus</location>
    </subcellularLocation>
    <subcellularLocation>
        <location>Chromosome</location>
    </subcellularLocation>
</comment>
<comment type="domain">
    <text>The [ST]-Q motif constitutes a recognition sequence for kinases from the PI3/PI4-kinase family.</text>
</comment>
<comment type="PTM">
    <text evidence="1">Phosphorylated to form H2AS128ph (gamma-H2A) in response to DNA double-strand breaks (DSBs) generated by exogenous genotoxic agents and by stalled replication forks. Phosphorylation is dependent on the DNA damage checkpoint kinases mec1/ATR and tel1/ATM, spreads on either side of a detected DSB site and may mark the surrounding chromatin for recruitment of proteins required for DNA damage signaling and repair. Gamma-H2A is removed from the DNA prior to the strand invasion-primer extension step of the repair process and subsequently dephosphorylated. Dephosphorylation is necessary for efficient recovery from the DNA damage checkpoint (By similarity).</text>
</comment>
<comment type="PTM">
    <text evidence="1">Acetylated by esa1 to form H2AK4ac and H2AK7ac.</text>
</comment>
<comment type="miscellaneous">
    <text evidence="3">In contrast to vertebrates and insects, its C-terminus is not monoubiquitinated.</text>
</comment>
<comment type="similarity">
    <text evidence="3">Belongs to the histone H2A family.</text>
</comment>
<comment type="caution">
    <text evidence="3">To ensure consistency between histone entries, we follow the 'Brno' nomenclature for histone modifications, with positions referring to those used in the literature for the 'closest' model organism. Due to slight variations in histone sequences between organisms and to the presence of initiator methionine in UniProtKB/Swiss-Prot sequences, the actual positions of modified amino acids in the sequence generally differ. In this entry the following conventions are used: H2AK4ac = acetylated Lys-5; H2AK7ac = acetylated Lys-9; H2AS128ph = phosphorylated Ser-131.</text>
</comment>
<name>H2A_ASPNC</name>
<organism>
    <name type="scientific">Aspergillus niger (strain ATCC MYA-4892 / CBS 513.88 / FGSC A1513)</name>
    <dbReference type="NCBI Taxonomy" id="425011"/>
    <lineage>
        <taxon>Eukaryota</taxon>
        <taxon>Fungi</taxon>
        <taxon>Dikarya</taxon>
        <taxon>Ascomycota</taxon>
        <taxon>Pezizomycotina</taxon>
        <taxon>Eurotiomycetes</taxon>
        <taxon>Eurotiomycetidae</taxon>
        <taxon>Eurotiales</taxon>
        <taxon>Aspergillaceae</taxon>
        <taxon>Aspergillus</taxon>
        <taxon>Aspergillus subgen. Circumdati</taxon>
    </lineage>
</organism>
<reference key="1">
    <citation type="journal article" date="2007" name="Nat. Biotechnol.">
        <title>Genome sequencing and analysis of the versatile cell factory Aspergillus niger CBS 513.88.</title>
        <authorList>
            <person name="Pel H.J."/>
            <person name="de Winde J.H."/>
            <person name="Archer D.B."/>
            <person name="Dyer P.S."/>
            <person name="Hofmann G."/>
            <person name="Schaap P.J."/>
            <person name="Turner G."/>
            <person name="de Vries R.P."/>
            <person name="Albang R."/>
            <person name="Albermann K."/>
            <person name="Andersen M.R."/>
            <person name="Bendtsen J.D."/>
            <person name="Benen J.A.E."/>
            <person name="van den Berg M."/>
            <person name="Breestraat S."/>
            <person name="Caddick M.X."/>
            <person name="Contreras R."/>
            <person name="Cornell M."/>
            <person name="Coutinho P.M."/>
            <person name="Danchin E.G.J."/>
            <person name="Debets A.J.M."/>
            <person name="Dekker P."/>
            <person name="van Dijck P.W.M."/>
            <person name="van Dijk A."/>
            <person name="Dijkhuizen L."/>
            <person name="Driessen A.J.M."/>
            <person name="d'Enfert C."/>
            <person name="Geysens S."/>
            <person name="Goosen C."/>
            <person name="Groot G.S.P."/>
            <person name="de Groot P.W.J."/>
            <person name="Guillemette T."/>
            <person name="Henrissat B."/>
            <person name="Herweijer M."/>
            <person name="van den Hombergh J.P.T.W."/>
            <person name="van den Hondel C.A.M.J.J."/>
            <person name="van der Heijden R.T.J.M."/>
            <person name="van der Kaaij R.M."/>
            <person name="Klis F.M."/>
            <person name="Kools H.J."/>
            <person name="Kubicek C.P."/>
            <person name="van Kuyk P.A."/>
            <person name="Lauber J."/>
            <person name="Lu X."/>
            <person name="van der Maarel M.J.E.C."/>
            <person name="Meulenberg R."/>
            <person name="Menke H."/>
            <person name="Mortimer M.A."/>
            <person name="Nielsen J."/>
            <person name="Oliver S.G."/>
            <person name="Olsthoorn M."/>
            <person name="Pal K."/>
            <person name="van Peij N.N.M.E."/>
            <person name="Ram A.F.J."/>
            <person name="Rinas U."/>
            <person name="Roubos J.A."/>
            <person name="Sagt C.M.J."/>
            <person name="Schmoll M."/>
            <person name="Sun J."/>
            <person name="Ussery D."/>
            <person name="Varga J."/>
            <person name="Vervecken W."/>
            <person name="van de Vondervoort P.J.J."/>
            <person name="Wedler H."/>
            <person name="Woesten H.A.B."/>
            <person name="Zeng A.-P."/>
            <person name="van Ooyen A.J.J."/>
            <person name="Visser J."/>
            <person name="Stam H."/>
        </authorList>
    </citation>
    <scope>NUCLEOTIDE SEQUENCE [LARGE SCALE GENOMIC DNA]</scope>
    <source>
        <strain>ATCC MYA-4892 / CBS 513.88 / FGSC A1513</strain>
    </source>
</reference>